<accession>A1QZD1</accession>
<keyword id="KW-1185">Reference proteome</keyword>
<keyword id="KW-0687">Ribonucleoprotein</keyword>
<keyword id="KW-0689">Ribosomal protein</keyword>
<proteinExistence type="inferred from homology"/>
<organism>
    <name type="scientific">Borrelia turicatae (strain 91E135)</name>
    <dbReference type="NCBI Taxonomy" id="314724"/>
    <lineage>
        <taxon>Bacteria</taxon>
        <taxon>Pseudomonadati</taxon>
        <taxon>Spirochaetota</taxon>
        <taxon>Spirochaetia</taxon>
        <taxon>Spirochaetales</taxon>
        <taxon>Borreliaceae</taxon>
        <taxon>Borrelia</taxon>
    </lineage>
</organism>
<sequence length="149" mass="17133">MNRITNNKTIWVKPKCVEKKWCMIDASDKVLGRVATEAVKILRGKHKPYYTPHQDLGDNVIIINASKIRLTGKKYSQKIYYRHSRYPGGLRSDTFRTLSERKPTAPLEIAIKGMLPKGPLGRELFRNLKVFAGSNHMLNSQNFYKLEAN</sequence>
<name>RL13_BORT9</name>
<protein>
    <recommendedName>
        <fullName evidence="1">Large ribosomal subunit protein uL13</fullName>
    </recommendedName>
    <alternativeName>
        <fullName evidence="2">50S ribosomal protein L13</fullName>
    </alternativeName>
</protein>
<dbReference type="EMBL" id="CP000049">
    <property type="protein sequence ID" value="AAX17673.1"/>
    <property type="molecule type" value="Genomic_DNA"/>
</dbReference>
<dbReference type="RefSeq" id="WP_011772292.1">
    <property type="nucleotide sequence ID" value="NZ_CP073176.1"/>
</dbReference>
<dbReference type="SMR" id="A1QZD1"/>
<dbReference type="KEGG" id="btu:BT0339"/>
<dbReference type="eggNOG" id="COG0102">
    <property type="taxonomic scope" value="Bacteria"/>
</dbReference>
<dbReference type="HOGENOM" id="CLU_082184_2_2_12"/>
<dbReference type="Proteomes" id="UP000001205">
    <property type="component" value="Chromosome"/>
</dbReference>
<dbReference type="GO" id="GO:0022625">
    <property type="term" value="C:cytosolic large ribosomal subunit"/>
    <property type="evidence" value="ECO:0007669"/>
    <property type="project" value="TreeGrafter"/>
</dbReference>
<dbReference type="GO" id="GO:0003729">
    <property type="term" value="F:mRNA binding"/>
    <property type="evidence" value="ECO:0007669"/>
    <property type="project" value="TreeGrafter"/>
</dbReference>
<dbReference type="GO" id="GO:0003735">
    <property type="term" value="F:structural constituent of ribosome"/>
    <property type="evidence" value="ECO:0007669"/>
    <property type="project" value="InterPro"/>
</dbReference>
<dbReference type="GO" id="GO:0017148">
    <property type="term" value="P:negative regulation of translation"/>
    <property type="evidence" value="ECO:0007669"/>
    <property type="project" value="TreeGrafter"/>
</dbReference>
<dbReference type="GO" id="GO:0006412">
    <property type="term" value="P:translation"/>
    <property type="evidence" value="ECO:0007669"/>
    <property type="project" value="UniProtKB-UniRule"/>
</dbReference>
<dbReference type="CDD" id="cd00392">
    <property type="entry name" value="Ribosomal_L13"/>
    <property type="match status" value="1"/>
</dbReference>
<dbReference type="Gene3D" id="3.90.1180.10">
    <property type="entry name" value="Ribosomal protein L13"/>
    <property type="match status" value="1"/>
</dbReference>
<dbReference type="HAMAP" id="MF_01366">
    <property type="entry name" value="Ribosomal_uL13"/>
    <property type="match status" value="1"/>
</dbReference>
<dbReference type="InterPro" id="IPR005822">
    <property type="entry name" value="Ribosomal_uL13"/>
</dbReference>
<dbReference type="InterPro" id="IPR005823">
    <property type="entry name" value="Ribosomal_uL13_bac-type"/>
</dbReference>
<dbReference type="InterPro" id="IPR023563">
    <property type="entry name" value="Ribosomal_uL13_CS"/>
</dbReference>
<dbReference type="InterPro" id="IPR036899">
    <property type="entry name" value="Ribosomal_uL13_sf"/>
</dbReference>
<dbReference type="NCBIfam" id="TIGR01066">
    <property type="entry name" value="rplM_bact"/>
    <property type="match status" value="1"/>
</dbReference>
<dbReference type="PANTHER" id="PTHR11545:SF2">
    <property type="entry name" value="LARGE RIBOSOMAL SUBUNIT PROTEIN UL13M"/>
    <property type="match status" value="1"/>
</dbReference>
<dbReference type="PANTHER" id="PTHR11545">
    <property type="entry name" value="RIBOSOMAL PROTEIN L13"/>
    <property type="match status" value="1"/>
</dbReference>
<dbReference type="Pfam" id="PF00572">
    <property type="entry name" value="Ribosomal_L13"/>
    <property type="match status" value="1"/>
</dbReference>
<dbReference type="PIRSF" id="PIRSF002181">
    <property type="entry name" value="Ribosomal_L13"/>
    <property type="match status" value="1"/>
</dbReference>
<dbReference type="SUPFAM" id="SSF52161">
    <property type="entry name" value="Ribosomal protein L13"/>
    <property type="match status" value="1"/>
</dbReference>
<dbReference type="PROSITE" id="PS00783">
    <property type="entry name" value="RIBOSOMAL_L13"/>
    <property type="match status" value="1"/>
</dbReference>
<evidence type="ECO:0000255" key="1">
    <source>
        <dbReference type="HAMAP-Rule" id="MF_01366"/>
    </source>
</evidence>
<evidence type="ECO:0000305" key="2"/>
<gene>
    <name evidence="1" type="primary">rplM</name>
    <name type="ordered locus">BT0339</name>
</gene>
<comment type="function">
    <text evidence="1">This protein is one of the early assembly proteins of the 50S ribosomal subunit, although it is not seen to bind rRNA by itself. It is important during the early stages of 50S assembly.</text>
</comment>
<comment type="subunit">
    <text evidence="1">Part of the 50S ribosomal subunit.</text>
</comment>
<comment type="similarity">
    <text evidence="1">Belongs to the universal ribosomal protein uL13 family.</text>
</comment>
<reference key="1">
    <citation type="submission" date="2004-12" db="EMBL/GenBank/DDBJ databases">
        <title>The genome sequence of Borrelia hermsii and Borrelia turicatae: comparative analysis of two agents of endemic N. America relapsing fever.</title>
        <authorList>
            <person name="Porcella S.F."/>
            <person name="Raffel S.J."/>
            <person name="Schrumpf M.E."/>
            <person name="Montgomery B."/>
            <person name="Smith T."/>
            <person name="Schwan T.G."/>
        </authorList>
    </citation>
    <scope>NUCLEOTIDE SEQUENCE [LARGE SCALE GENOMIC DNA]</scope>
    <source>
        <strain>91E135</strain>
    </source>
</reference>
<feature type="chain" id="PRO_1000166853" description="Large ribosomal subunit protein uL13">
    <location>
        <begin position="1"/>
        <end position="149"/>
    </location>
</feature>